<dbReference type="EC" id="2.7.7.8" evidence="1"/>
<dbReference type="EMBL" id="CP000776">
    <property type="protein sequence ID" value="ABS51117.1"/>
    <property type="molecule type" value="Genomic_DNA"/>
</dbReference>
<dbReference type="RefSeq" id="WP_012108124.1">
    <property type="nucleotide sequence ID" value="NC_009714.1"/>
</dbReference>
<dbReference type="SMR" id="A7I002"/>
<dbReference type="STRING" id="360107.CHAB381_0237"/>
<dbReference type="KEGG" id="cha:CHAB381_0237"/>
<dbReference type="eggNOG" id="COG1185">
    <property type="taxonomic scope" value="Bacteria"/>
</dbReference>
<dbReference type="HOGENOM" id="CLU_004217_2_2_7"/>
<dbReference type="OrthoDB" id="9804305at2"/>
<dbReference type="Proteomes" id="UP000002407">
    <property type="component" value="Chromosome"/>
</dbReference>
<dbReference type="GO" id="GO:0005829">
    <property type="term" value="C:cytosol"/>
    <property type="evidence" value="ECO:0007669"/>
    <property type="project" value="TreeGrafter"/>
</dbReference>
<dbReference type="GO" id="GO:0000175">
    <property type="term" value="F:3'-5'-RNA exonuclease activity"/>
    <property type="evidence" value="ECO:0007669"/>
    <property type="project" value="TreeGrafter"/>
</dbReference>
<dbReference type="GO" id="GO:0000287">
    <property type="term" value="F:magnesium ion binding"/>
    <property type="evidence" value="ECO:0007669"/>
    <property type="project" value="UniProtKB-UniRule"/>
</dbReference>
<dbReference type="GO" id="GO:0004654">
    <property type="term" value="F:polyribonucleotide nucleotidyltransferase activity"/>
    <property type="evidence" value="ECO:0007669"/>
    <property type="project" value="UniProtKB-UniRule"/>
</dbReference>
<dbReference type="GO" id="GO:0003723">
    <property type="term" value="F:RNA binding"/>
    <property type="evidence" value="ECO:0007669"/>
    <property type="project" value="UniProtKB-UniRule"/>
</dbReference>
<dbReference type="GO" id="GO:0006402">
    <property type="term" value="P:mRNA catabolic process"/>
    <property type="evidence" value="ECO:0007669"/>
    <property type="project" value="UniProtKB-UniRule"/>
</dbReference>
<dbReference type="GO" id="GO:0006396">
    <property type="term" value="P:RNA processing"/>
    <property type="evidence" value="ECO:0007669"/>
    <property type="project" value="InterPro"/>
</dbReference>
<dbReference type="CDD" id="cd02393">
    <property type="entry name" value="KH-I_PNPase"/>
    <property type="match status" value="1"/>
</dbReference>
<dbReference type="CDD" id="cd11364">
    <property type="entry name" value="RNase_PH_PNPase_2"/>
    <property type="match status" value="1"/>
</dbReference>
<dbReference type="FunFam" id="3.30.1370.10:FF:000001">
    <property type="entry name" value="Polyribonucleotide nucleotidyltransferase"/>
    <property type="match status" value="1"/>
</dbReference>
<dbReference type="FunFam" id="3.30.230.70:FF:000026">
    <property type="entry name" value="Polyribonucleotide nucleotidyltransferase"/>
    <property type="match status" value="1"/>
</dbReference>
<dbReference type="FunFam" id="3.30.230.70:FF:000029">
    <property type="entry name" value="Polyribonucleotide nucleotidyltransferase"/>
    <property type="match status" value="1"/>
</dbReference>
<dbReference type="Gene3D" id="3.30.230.70">
    <property type="entry name" value="GHMP Kinase, N-terminal domain"/>
    <property type="match status" value="2"/>
</dbReference>
<dbReference type="Gene3D" id="3.30.1370.10">
    <property type="entry name" value="K Homology domain, type 1"/>
    <property type="match status" value="1"/>
</dbReference>
<dbReference type="Gene3D" id="2.40.50.140">
    <property type="entry name" value="Nucleic acid-binding proteins"/>
    <property type="match status" value="1"/>
</dbReference>
<dbReference type="HAMAP" id="MF_01595">
    <property type="entry name" value="PNPase"/>
    <property type="match status" value="1"/>
</dbReference>
<dbReference type="InterPro" id="IPR001247">
    <property type="entry name" value="ExoRNase_PH_dom1"/>
</dbReference>
<dbReference type="InterPro" id="IPR015847">
    <property type="entry name" value="ExoRNase_PH_dom2"/>
</dbReference>
<dbReference type="InterPro" id="IPR036345">
    <property type="entry name" value="ExoRNase_PH_dom2_sf"/>
</dbReference>
<dbReference type="InterPro" id="IPR004087">
    <property type="entry name" value="KH_dom"/>
</dbReference>
<dbReference type="InterPro" id="IPR004088">
    <property type="entry name" value="KH_dom_type_1"/>
</dbReference>
<dbReference type="InterPro" id="IPR036612">
    <property type="entry name" value="KH_dom_type_1_sf"/>
</dbReference>
<dbReference type="InterPro" id="IPR012340">
    <property type="entry name" value="NA-bd_OB-fold"/>
</dbReference>
<dbReference type="InterPro" id="IPR012162">
    <property type="entry name" value="PNPase"/>
</dbReference>
<dbReference type="InterPro" id="IPR027408">
    <property type="entry name" value="PNPase/RNase_PH_dom_sf"/>
</dbReference>
<dbReference type="InterPro" id="IPR015848">
    <property type="entry name" value="PNPase_PH_RNA-bd_bac/org-type"/>
</dbReference>
<dbReference type="InterPro" id="IPR020568">
    <property type="entry name" value="Ribosomal_Su5_D2-typ_SF"/>
</dbReference>
<dbReference type="InterPro" id="IPR003029">
    <property type="entry name" value="S1_domain"/>
</dbReference>
<dbReference type="NCBIfam" id="TIGR03591">
    <property type="entry name" value="polynuc_phos"/>
    <property type="match status" value="1"/>
</dbReference>
<dbReference type="NCBIfam" id="NF008805">
    <property type="entry name" value="PRK11824.1"/>
    <property type="match status" value="1"/>
</dbReference>
<dbReference type="PANTHER" id="PTHR11252">
    <property type="entry name" value="POLYRIBONUCLEOTIDE NUCLEOTIDYLTRANSFERASE"/>
    <property type="match status" value="1"/>
</dbReference>
<dbReference type="PANTHER" id="PTHR11252:SF0">
    <property type="entry name" value="POLYRIBONUCLEOTIDE NUCLEOTIDYLTRANSFERASE 1, MITOCHONDRIAL"/>
    <property type="match status" value="1"/>
</dbReference>
<dbReference type="Pfam" id="PF00013">
    <property type="entry name" value="KH_1"/>
    <property type="match status" value="1"/>
</dbReference>
<dbReference type="Pfam" id="PF03726">
    <property type="entry name" value="PNPase"/>
    <property type="match status" value="1"/>
</dbReference>
<dbReference type="Pfam" id="PF01138">
    <property type="entry name" value="RNase_PH"/>
    <property type="match status" value="2"/>
</dbReference>
<dbReference type="Pfam" id="PF03725">
    <property type="entry name" value="RNase_PH_C"/>
    <property type="match status" value="2"/>
</dbReference>
<dbReference type="Pfam" id="PF00575">
    <property type="entry name" value="S1"/>
    <property type="match status" value="1"/>
</dbReference>
<dbReference type="PIRSF" id="PIRSF005499">
    <property type="entry name" value="PNPase"/>
    <property type="match status" value="1"/>
</dbReference>
<dbReference type="SMART" id="SM00322">
    <property type="entry name" value="KH"/>
    <property type="match status" value="1"/>
</dbReference>
<dbReference type="SMART" id="SM00316">
    <property type="entry name" value="S1"/>
    <property type="match status" value="1"/>
</dbReference>
<dbReference type="SUPFAM" id="SSF54791">
    <property type="entry name" value="Eukaryotic type KH-domain (KH-domain type I)"/>
    <property type="match status" value="1"/>
</dbReference>
<dbReference type="SUPFAM" id="SSF50249">
    <property type="entry name" value="Nucleic acid-binding proteins"/>
    <property type="match status" value="1"/>
</dbReference>
<dbReference type="SUPFAM" id="SSF55666">
    <property type="entry name" value="Ribonuclease PH domain 2-like"/>
    <property type="match status" value="2"/>
</dbReference>
<dbReference type="SUPFAM" id="SSF54211">
    <property type="entry name" value="Ribosomal protein S5 domain 2-like"/>
    <property type="match status" value="2"/>
</dbReference>
<dbReference type="PROSITE" id="PS50084">
    <property type="entry name" value="KH_TYPE_1"/>
    <property type="match status" value="1"/>
</dbReference>
<dbReference type="PROSITE" id="PS50126">
    <property type="entry name" value="S1"/>
    <property type="match status" value="1"/>
</dbReference>
<gene>
    <name evidence="1" type="primary">pnp</name>
    <name type="ordered locus">CHAB381_0237</name>
</gene>
<reference key="1">
    <citation type="submission" date="2007-07" db="EMBL/GenBank/DDBJ databases">
        <title>Complete genome sequence of Campylobacter hominis ATCC BAA-381, a commensal isolated from the human gastrointestinal tract.</title>
        <authorList>
            <person name="Fouts D.E."/>
            <person name="Mongodin E.F."/>
            <person name="Puiu D."/>
            <person name="Sebastian Y."/>
            <person name="Miller W.G."/>
            <person name="Mandrell R.E."/>
            <person name="Nelson K.E."/>
        </authorList>
    </citation>
    <scope>NUCLEOTIDE SEQUENCE [LARGE SCALE GENOMIC DNA]</scope>
    <source>
        <strain>ATCC BAA-381 / DSM 21671 / CCUG 45161 / LMG 19568 / NCTC 13146 / CH001A</strain>
    </source>
</reference>
<feature type="chain" id="PRO_0000329570" description="Polyribonucleotide nucleotidyltransferase">
    <location>
        <begin position="1"/>
        <end position="711"/>
    </location>
</feature>
<feature type="domain" description="KH" evidence="1">
    <location>
        <begin position="560"/>
        <end position="620"/>
    </location>
</feature>
<feature type="domain" description="S1 motif" evidence="1">
    <location>
        <begin position="651"/>
        <end position="710"/>
    </location>
</feature>
<feature type="binding site" evidence="1">
    <location>
        <position position="494"/>
    </location>
    <ligand>
        <name>Mg(2+)</name>
        <dbReference type="ChEBI" id="CHEBI:18420"/>
    </ligand>
</feature>
<feature type="binding site" evidence="1">
    <location>
        <position position="500"/>
    </location>
    <ligand>
        <name>Mg(2+)</name>
        <dbReference type="ChEBI" id="CHEBI:18420"/>
    </ligand>
</feature>
<proteinExistence type="inferred from homology"/>
<organism>
    <name type="scientific">Campylobacter hominis (strain ATCC BAA-381 / DSM 21671 / CCUG 45161 / LMG 19568 / NCTC 13146 / CH001A)</name>
    <dbReference type="NCBI Taxonomy" id="360107"/>
    <lineage>
        <taxon>Bacteria</taxon>
        <taxon>Pseudomonadati</taxon>
        <taxon>Campylobacterota</taxon>
        <taxon>Epsilonproteobacteria</taxon>
        <taxon>Campylobacterales</taxon>
        <taxon>Campylobacteraceae</taxon>
        <taxon>Campylobacter</taxon>
    </lineage>
</organism>
<accession>A7I002</accession>
<name>PNP_CAMHC</name>
<evidence type="ECO:0000255" key="1">
    <source>
        <dbReference type="HAMAP-Rule" id="MF_01595"/>
    </source>
</evidence>
<keyword id="KW-0963">Cytoplasm</keyword>
<keyword id="KW-0460">Magnesium</keyword>
<keyword id="KW-0479">Metal-binding</keyword>
<keyword id="KW-0548">Nucleotidyltransferase</keyword>
<keyword id="KW-1185">Reference proteome</keyword>
<keyword id="KW-0694">RNA-binding</keyword>
<keyword id="KW-0808">Transferase</keyword>
<sequence length="711" mass="78319">MKYAVEVNNNVEIFEINKVAKQAAGACLMKVKNTVVLATVARENTQVEEDFLPLTVQYIEKQYAAGRIPGGYIKRETKPGDFETLTSRIIDRSLRPLFPKGYAYPTQIVVFVLSADPEIDLQVVGLNAASVALYLSDIPMKAPVCGVRVGYINDSFVINPTNSELQNSALDLYVAGVKDEMLMIEMRSLPNMNGENQNMNEFSEDKMVEAIDFASKAILAGSTAYENTFSALKKPDAALEYKPEVEDENIANFIEQNFTSDVQAAINQMAKSERATELDKIVNKIMQSETAIQNEWQKNVVSNIIGKFKRKIIRSQIINERRRADGRALDEIRPISIETNILPNAHGSCLFTRGQTQALVVTTLGGETDAQVSDSLTSNTPISERFMFQYNFPGFCVGEASPLKSPGRRELGHGNLAKRALTPSVPLNNPQVIRTVSEILESNGSSSMASVCGGSLSLRAAGVSTLKLVAGVAMGLIFEDDKHAILTDIMGLEDHDGDMDFKVAGTREGITALQMDIKLGGISLEILREALNQAKDGRNYILNLMEVANDDIIINEEILPKIEIFGVDPNKMVDIIGQGGKTIKELIDKYEVSIDLERDSGEVKIQGANKINVENAKSDILNIVKKSNDFKKGSKFGHHHERKETSNFQVGEEFDGVVKKIMDFGAFISLKDGIDGLLHVSKIKTQLSEGDTLRVKVEEIKRGKISLELCE</sequence>
<protein>
    <recommendedName>
        <fullName evidence="1">Polyribonucleotide nucleotidyltransferase</fullName>
        <ecNumber evidence="1">2.7.7.8</ecNumber>
    </recommendedName>
    <alternativeName>
        <fullName evidence="1">Polynucleotide phosphorylase</fullName>
        <shortName evidence="1">PNPase</shortName>
    </alternativeName>
</protein>
<comment type="function">
    <text evidence="1">Involved in mRNA degradation. Catalyzes the phosphorolysis of single-stranded polyribonucleotides processively in the 3'- to 5'-direction.</text>
</comment>
<comment type="catalytic activity">
    <reaction evidence="1">
        <text>RNA(n+1) + phosphate = RNA(n) + a ribonucleoside 5'-diphosphate</text>
        <dbReference type="Rhea" id="RHEA:22096"/>
        <dbReference type="Rhea" id="RHEA-COMP:14527"/>
        <dbReference type="Rhea" id="RHEA-COMP:17342"/>
        <dbReference type="ChEBI" id="CHEBI:43474"/>
        <dbReference type="ChEBI" id="CHEBI:57930"/>
        <dbReference type="ChEBI" id="CHEBI:140395"/>
        <dbReference type="EC" id="2.7.7.8"/>
    </reaction>
</comment>
<comment type="cofactor">
    <cofactor evidence="1">
        <name>Mg(2+)</name>
        <dbReference type="ChEBI" id="CHEBI:18420"/>
    </cofactor>
</comment>
<comment type="subcellular location">
    <subcellularLocation>
        <location evidence="1">Cytoplasm</location>
    </subcellularLocation>
</comment>
<comment type="similarity">
    <text evidence="1">Belongs to the polyribonucleotide nucleotidyltransferase family.</text>
</comment>